<evidence type="ECO:0000256" key="1">
    <source>
        <dbReference type="SAM" id="MobiDB-lite"/>
    </source>
</evidence>
<protein>
    <recommendedName>
        <fullName>Uncharacterized 36 kDa protein</fullName>
    </recommendedName>
</protein>
<accession>P17565</accession>
<reference key="1">
    <citation type="journal article" date="1990" name="Nucleic Acids Res.">
        <title>Nucleotide sequence of a high copy number plasmid from Halobacterium strain GRB.</title>
        <authorList>
            <person name="Hackett N.R."/>
            <person name="Krebs M.P."/>
            <person name="Dassarma S."/>
            <person name="Goebel W."/>
            <person name="RajBhandary U.L."/>
            <person name="Khorana H.G."/>
        </authorList>
    </citation>
    <scope>NUCLEOTIDE SEQUENCE [GENOMIC DNA]</scope>
    <source>
        <strain>DSM 22414 / DS21 / GRB</strain>
    </source>
</reference>
<name>Y35K_HALSI</name>
<organism>
    <name type="scientific">Halobacterium salinarum</name>
    <name type="common">Halobacterium halobium</name>
    <dbReference type="NCBI Taxonomy" id="2242"/>
    <lineage>
        <taxon>Archaea</taxon>
        <taxon>Methanobacteriati</taxon>
        <taxon>Methanobacteriota</taxon>
        <taxon>Stenosarchaea group</taxon>
        <taxon>Halobacteria</taxon>
        <taxon>Halobacteriales</taxon>
        <taxon>Halobacteriaceae</taxon>
        <taxon>Halobacterium</taxon>
    </lineage>
</organism>
<geneLocation type="plasmid">
    <name>pGRB1</name>
</geneLocation>
<comment type="function">
    <text>Possibly necessary for replication.</text>
</comment>
<feature type="chain" id="PRO_0000066086" description="Uncharacterized 36 kDa protein">
    <location>
        <begin position="1"/>
        <end position="316"/>
    </location>
</feature>
<feature type="region of interest" description="Disordered" evidence="1">
    <location>
        <begin position="285"/>
        <end position="316"/>
    </location>
</feature>
<feature type="compositionally biased region" description="Acidic residues" evidence="1">
    <location>
        <begin position="289"/>
        <end position="298"/>
    </location>
</feature>
<keyword id="KW-0235">DNA replication</keyword>
<keyword id="KW-0614">Plasmid</keyword>
<dbReference type="EMBL" id="X52610">
    <property type="protein sequence ID" value="CAA36841.1"/>
    <property type="molecule type" value="Genomic_DNA"/>
</dbReference>
<dbReference type="PIR" id="S10152">
    <property type="entry name" value="S10152"/>
</dbReference>
<dbReference type="GO" id="GO:0006260">
    <property type="term" value="P:DNA replication"/>
    <property type="evidence" value="ECO:0007669"/>
    <property type="project" value="UniProtKB-KW"/>
</dbReference>
<dbReference type="InterPro" id="IPR009870">
    <property type="entry name" value="DUF1424"/>
</dbReference>
<dbReference type="Pfam" id="PF07232">
    <property type="entry name" value="DUF1424"/>
    <property type="match status" value="1"/>
</dbReference>
<sequence>MAKRDGMKLRDELTFDTSRAVKAVSWGEAIDRFQSWYDDQRGTQIVVENELGETVGFDMPNRFTPEYREMLYAKAQSLERGLRERWGSLLHTGMVTLTASSTDDEGRLRPPLEHFEDLLESWEAVRRALARVLEGREWEYLAILEPHESGYVHIHLGVFVRGPVVAEQFEPVLDAHLRNCPTAGEDAHQVFDENGDEDAVRVRRSSHPSRSGGVENLGAYLAAYMAGEYGSEPSEMPENVRAFYATMWASGRQWFRPSNGAQELMQPEEDDEGDSIEEWEMVGIAPEGDLGDIIEVDPSEPRSDPYRRLRTPPPGG</sequence>
<proteinExistence type="predicted"/>